<comment type="function">
    <text evidence="1">Regulates transcriptional attenuation of the pyrimidine nucleotide (pyr) operon by binding in a uridine-dependent manner to specific sites on pyr mRNA. This disrupts an antiterminator hairpin in the RNA and favors formation of a downstream transcription terminator, leading to a reduced expression of downstream genes.</text>
</comment>
<comment type="function">
    <text evidence="1">Also displays a weak uracil phosphoribosyltransferase activity which is not physiologically significant.</text>
</comment>
<comment type="catalytic activity">
    <reaction evidence="1">
        <text>UMP + diphosphate = 5-phospho-alpha-D-ribose 1-diphosphate + uracil</text>
        <dbReference type="Rhea" id="RHEA:13017"/>
        <dbReference type="ChEBI" id="CHEBI:17568"/>
        <dbReference type="ChEBI" id="CHEBI:33019"/>
        <dbReference type="ChEBI" id="CHEBI:57865"/>
        <dbReference type="ChEBI" id="CHEBI:58017"/>
        <dbReference type="EC" id="2.4.2.9"/>
    </reaction>
</comment>
<comment type="subunit">
    <text evidence="1">Homodimer and homohexamer; in equilibrium.</text>
</comment>
<comment type="similarity">
    <text evidence="1">Belongs to the purine/pyrimidine phosphoribosyltransferase family. PyrR subfamily.</text>
</comment>
<proteinExistence type="inferred from homology"/>
<name>PYRR_LISMC</name>
<accession>C1KWD9</accession>
<protein>
    <recommendedName>
        <fullName evidence="1">Bifunctional protein PyrR</fullName>
    </recommendedName>
    <domain>
        <recommendedName>
            <fullName evidence="1">Pyrimidine operon regulatory protein</fullName>
        </recommendedName>
    </domain>
    <domain>
        <recommendedName>
            <fullName evidence="1">Uracil phosphoribosyltransferase</fullName>
            <shortName evidence="1">UPRTase</shortName>
            <ecNumber evidence="1">2.4.2.9</ecNumber>
        </recommendedName>
    </domain>
</protein>
<dbReference type="EC" id="2.4.2.9" evidence="1"/>
<dbReference type="EMBL" id="FM242711">
    <property type="protein sequence ID" value="CAS05614.1"/>
    <property type="molecule type" value="Genomic_DNA"/>
</dbReference>
<dbReference type="RefSeq" id="WP_003726598.1">
    <property type="nucleotide sequence ID" value="NC_012488.1"/>
</dbReference>
<dbReference type="SMR" id="C1KWD9"/>
<dbReference type="KEGG" id="lmc:Lm4b_01856"/>
<dbReference type="HOGENOM" id="CLU_094234_2_1_9"/>
<dbReference type="GO" id="GO:0003723">
    <property type="term" value="F:RNA binding"/>
    <property type="evidence" value="ECO:0007669"/>
    <property type="project" value="UniProtKB-UniRule"/>
</dbReference>
<dbReference type="GO" id="GO:0004845">
    <property type="term" value="F:uracil phosphoribosyltransferase activity"/>
    <property type="evidence" value="ECO:0007669"/>
    <property type="project" value="UniProtKB-UniRule"/>
</dbReference>
<dbReference type="GO" id="GO:0006353">
    <property type="term" value="P:DNA-templated transcription termination"/>
    <property type="evidence" value="ECO:0007669"/>
    <property type="project" value="UniProtKB-UniRule"/>
</dbReference>
<dbReference type="CDD" id="cd06223">
    <property type="entry name" value="PRTases_typeI"/>
    <property type="match status" value="1"/>
</dbReference>
<dbReference type="FunFam" id="3.40.50.2020:FF:000020">
    <property type="entry name" value="Bifunctional protein PyrR"/>
    <property type="match status" value="1"/>
</dbReference>
<dbReference type="Gene3D" id="3.40.50.2020">
    <property type="match status" value="1"/>
</dbReference>
<dbReference type="HAMAP" id="MF_01219">
    <property type="entry name" value="PyrR"/>
    <property type="match status" value="1"/>
</dbReference>
<dbReference type="InterPro" id="IPR000836">
    <property type="entry name" value="PRibTrfase_dom"/>
</dbReference>
<dbReference type="InterPro" id="IPR029057">
    <property type="entry name" value="PRTase-like"/>
</dbReference>
<dbReference type="InterPro" id="IPR023050">
    <property type="entry name" value="PyrR"/>
</dbReference>
<dbReference type="InterPro" id="IPR050137">
    <property type="entry name" value="PyrR_bifunctional"/>
</dbReference>
<dbReference type="NCBIfam" id="NF003545">
    <property type="entry name" value="PRK05205.1-1"/>
    <property type="match status" value="1"/>
</dbReference>
<dbReference type="NCBIfam" id="NF003548">
    <property type="entry name" value="PRK05205.1-4"/>
    <property type="match status" value="1"/>
</dbReference>
<dbReference type="NCBIfam" id="NF003549">
    <property type="entry name" value="PRK05205.1-5"/>
    <property type="match status" value="1"/>
</dbReference>
<dbReference type="PANTHER" id="PTHR11608">
    <property type="entry name" value="BIFUNCTIONAL PROTEIN PYRR"/>
    <property type="match status" value="1"/>
</dbReference>
<dbReference type="PANTHER" id="PTHR11608:SF0">
    <property type="entry name" value="BIFUNCTIONAL PROTEIN PYRR"/>
    <property type="match status" value="1"/>
</dbReference>
<dbReference type="Pfam" id="PF00156">
    <property type="entry name" value="Pribosyltran"/>
    <property type="match status" value="1"/>
</dbReference>
<dbReference type="SUPFAM" id="SSF53271">
    <property type="entry name" value="PRTase-like"/>
    <property type="match status" value="1"/>
</dbReference>
<feature type="chain" id="PRO_1000213952" description="Bifunctional protein PyrR">
    <location>
        <begin position="1"/>
        <end position="183"/>
    </location>
</feature>
<feature type="short sequence motif" description="PRPP-binding" evidence="1">
    <location>
        <begin position="102"/>
        <end position="114"/>
    </location>
</feature>
<evidence type="ECO:0000255" key="1">
    <source>
        <dbReference type="HAMAP-Rule" id="MF_01219"/>
    </source>
</evidence>
<sequence length="183" mass="20539">MQKQVVVMDEAAIKRALTRVSYEIIERNKGTKNLALVGIKTRGIYLAERLHKRILEIEGIDVPVGDIDITLYRDDLSFKDDKTREPAVHGTNIPFDINGKKVVLVDDVLYTGRTVRAAMDALMDVGRPAQIHLAVLADRGHRELPIRADYVGKNIPTSGNERVEVRLTDVDNEEDAVIINKNE</sequence>
<keyword id="KW-0328">Glycosyltransferase</keyword>
<keyword id="KW-0694">RNA-binding</keyword>
<keyword id="KW-0804">Transcription</keyword>
<keyword id="KW-0805">Transcription regulation</keyword>
<keyword id="KW-0806">Transcription termination</keyword>
<keyword id="KW-0808">Transferase</keyword>
<organism>
    <name type="scientific">Listeria monocytogenes serotype 4b (strain CLIP80459)</name>
    <dbReference type="NCBI Taxonomy" id="568819"/>
    <lineage>
        <taxon>Bacteria</taxon>
        <taxon>Bacillati</taxon>
        <taxon>Bacillota</taxon>
        <taxon>Bacilli</taxon>
        <taxon>Bacillales</taxon>
        <taxon>Listeriaceae</taxon>
        <taxon>Listeria</taxon>
    </lineage>
</organism>
<reference key="1">
    <citation type="journal article" date="2012" name="BMC Genomics">
        <title>Comparative genomics and transcriptomics of lineages I, II, and III strains of Listeria monocytogenes.</title>
        <authorList>
            <person name="Hain T."/>
            <person name="Ghai R."/>
            <person name="Billion A."/>
            <person name="Kuenne C.T."/>
            <person name="Steinweg C."/>
            <person name="Izar B."/>
            <person name="Mohamed W."/>
            <person name="Mraheil M."/>
            <person name="Domann E."/>
            <person name="Schaffrath S."/>
            <person name="Karst U."/>
            <person name="Goesmann A."/>
            <person name="Oehm S."/>
            <person name="Puhler A."/>
            <person name="Merkl R."/>
            <person name="Vorwerk S."/>
            <person name="Glaser P."/>
            <person name="Garrido P."/>
            <person name="Rusniok C."/>
            <person name="Buchrieser C."/>
            <person name="Goebel W."/>
            <person name="Chakraborty T."/>
        </authorList>
    </citation>
    <scope>NUCLEOTIDE SEQUENCE [LARGE SCALE GENOMIC DNA]</scope>
    <source>
        <strain>CLIP80459</strain>
    </source>
</reference>
<gene>
    <name evidence="1" type="primary">pyrR</name>
    <name type="ordered locus">Lm4b_01856</name>
</gene>